<name>RBFA_CLOAB</name>
<organism>
    <name type="scientific">Clostridium acetobutylicum (strain ATCC 824 / DSM 792 / JCM 1419 / IAM 19013 / LMG 5710 / NBRC 13948 / NRRL B-527 / VKM B-1787 / 2291 / W)</name>
    <dbReference type="NCBI Taxonomy" id="272562"/>
    <lineage>
        <taxon>Bacteria</taxon>
        <taxon>Bacillati</taxon>
        <taxon>Bacillota</taxon>
        <taxon>Clostridia</taxon>
        <taxon>Eubacteriales</taxon>
        <taxon>Clostridiaceae</taxon>
        <taxon>Clostridium</taxon>
    </lineage>
</organism>
<feature type="chain" id="PRO_0000102649" description="Ribosome-binding factor A">
    <location>
        <begin position="1"/>
        <end position="121"/>
    </location>
</feature>
<sequence length="121" mass="13845">MAKYRAGRINEEVKKAISSIIQNDIRDPRLTSMISVIKVDVTKDLRYAKAYVSILGDEAKKKETMDILKKSESFIRKELGYAVKLRYTPEVIIELDTSIEKGMHIDAILEKIKGSDKNDNR</sequence>
<dbReference type="EMBL" id="AE001437">
    <property type="protein sequence ID" value="AAK79768.1"/>
    <property type="molecule type" value="Genomic_DNA"/>
</dbReference>
<dbReference type="PIR" id="E97122">
    <property type="entry name" value="E97122"/>
</dbReference>
<dbReference type="RefSeq" id="NP_348428.1">
    <property type="nucleotide sequence ID" value="NC_003030.1"/>
</dbReference>
<dbReference type="RefSeq" id="WP_010965109.1">
    <property type="nucleotide sequence ID" value="NC_003030.1"/>
</dbReference>
<dbReference type="SMR" id="Q97I50"/>
<dbReference type="STRING" id="272562.CA_C1803"/>
<dbReference type="GeneID" id="44998297"/>
<dbReference type="KEGG" id="cac:CA_C1803"/>
<dbReference type="PATRIC" id="fig|272562.8.peg.2009"/>
<dbReference type="eggNOG" id="COG0858">
    <property type="taxonomic scope" value="Bacteria"/>
</dbReference>
<dbReference type="HOGENOM" id="CLU_089475_6_3_9"/>
<dbReference type="OrthoDB" id="307788at2"/>
<dbReference type="Proteomes" id="UP000000814">
    <property type="component" value="Chromosome"/>
</dbReference>
<dbReference type="GO" id="GO:0005829">
    <property type="term" value="C:cytosol"/>
    <property type="evidence" value="ECO:0007669"/>
    <property type="project" value="TreeGrafter"/>
</dbReference>
<dbReference type="GO" id="GO:0043024">
    <property type="term" value="F:ribosomal small subunit binding"/>
    <property type="evidence" value="ECO:0007669"/>
    <property type="project" value="TreeGrafter"/>
</dbReference>
<dbReference type="GO" id="GO:0030490">
    <property type="term" value="P:maturation of SSU-rRNA"/>
    <property type="evidence" value="ECO:0007669"/>
    <property type="project" value="UniProtKB-UniRule"/>
</dbReference>
<dbReference type="Gene3D" id="3.30.300.20">
    <property type="match status" value="1"/>
</dbReference>
<dbReference type="HAMAP" id="MF_00003">
    <property type="entry name" value="RbfA"/>
    <property type="match status" value="1"/>
</dbReference>
<dbReference type="InterPro" id="IPR015946">
    <property type="entry name" value="KH_dom-like_a/b"/>
</dbReference>
<dbReference type="InterPro" id="IPR000238">
    <property type="entry name" value="RbfA"/>
</dbReference>
<dbReference type="InterPro" id="IPR023799">
    <property type="entry name" value="RbfA_dom_sf"/>
</dbReference>
<dbReference type="InterPro" id="IPR020053">
    <property type="entry name" value="Ribosome-bd_factorA_CS"/>
</dbReference>
<dbReference type="NCBIfam" id="TIGR00082">
    <property type="entry name" value="rbfA"/>
    <property type="match status" value="1"/>
</dbReference>
<dbReference type="PANTHER" id="PTHR33515">
    <property type="entry name" value="RIBOSOME-BINDING FACTOR A, CHLOROPLASTIC-RELATED"/>
    <property type="match status" value="1"/>
</dbReference>
<dbReference type="PANTHER" id="PTHR33515:SF1">
    <property type="entry name" value="RIBOSOME-BINDING FACTOR A, CHLOROPLASTIC-RELATED"/>
    <property type="match status" value="1"/>
</dbReference>
<dbReference type="Pfam" id="PF02033">
    <property type="entry name" value="RBFA"/>
    <property type="match status" value="1"/>
</dbReference>
<dbReference type="SUPFAM" id="SSF89919">
    <property type="entry name" value="Ribosome-binding factor A, RbfA"/>
    <property type="match status" value="1"/>
</dbReference>
<dbReference type="PROSITE" id="PS01319">
    <property type="entry name" value="RBFA"/>
    <property type="match status" value="1"/>
</dbReference>
<comment type="function">
    <text evidence="1">One of several proteins that assist in the late maturation steps of the functional core of the 30S ribosomal subunit. Associates with free 30S ribosomal subunits (but not with 30S subunits that are part of 70S ribosomes or polysomes). Required for efficient processing of 16S rRNA. May interact with the 5'-terminal helix region of 16S rRNA.</text>
</comment>
<comment type="subunit">
    <text evidence="1">Monomer. Binds 30S ribosomal subunits, but not 50S ribosomal subunits or 70S ribosomes.</text>
</comment>
<comment type="subcellular location">
    <subcellularLocation>
        <location evidence="1">Cytoplasm</location>
    </subcellularLocation>
</comment>
<comment type="similarity">
    <text evidence="1">Belongs to the RbfA family.</text>
</comment>
<reference key="1">
    <citation type="journal article" date="2001" name="J. Bacteriol.">
        <title>Genome sequence and comparative analysis of the solvent-producing bacterium Clostridium acetobutylicum.</title>
        <authorList>
            <person name="Noelling J."/>
            <person name="Breton G."/>
            <person name="Omelchenko M.V."/>
            <person name="Makarova K.S."/>
            <person name="Zeng Q."/>
            <person name="Gibson R."/>
            <person name="Lee H.M."/>
            <person name="Dubois J."/>
            <person name="Qiu D."/>
            <person name="Hitti J."/>
            <person name="Wolf Y.I."/>
            <person name="Tatusov R.L."/>
            <person name="Sabathe F."/>
            <person name="Doucette-Stamm L.A."/>
            <person name="Soucaille P."/>
            <person name="Daly M.J."/>
            <person name="Bennett G.N."/>
            <person name="Koonin E.V."/>
            <person name="Smith D.R."/>
        </authorList>
    </citation>
    <scope>NUCLEOTIDE SEQUENCE [LARGE SCALE GENOMIC DNA]</scope>
    <source>
        <strain>ATCC 824 / DSM 792 / JCM 1419 / IAM 19013 / LMG 5710 / NBRC 13948 / NRRL B-527 / VKM B-1787 / 2291 / W</strain>
    </source>
</reference>
<protein>
    <recommendedName>
        <fullName evidence="1">Ribosome-binding factor A</fullName>
    </recommendedName>
</protein>
<proteinExistence type="inferred from homology"/>
<evidence type="ECO:0000255" key="1">
    <source>
        <dbReference type="HAMAP-Rule" id="MF_00003"/>
    </source>
</evidence>
<keyword id="KW-0963">Cytoplasm</keyword>
<keyword id="KW-1185">Reference proteome</keyword>
<keyword id="KW-0690">Ribosome biogenesis</keyword>
<gene>
    <name evidence="1" type="primary">rbfA</name>
    <name type="ordered locus">CA_C1803</name>
</gene>
<accession>Q97I50</accession>